<keyword id="KW-0378">Hydrolase</keyword>
<keyword id="KW-0645">Protease</keyword>
<keyword id="KW-0865">Zymogen</keyword>
<evidence type="ECO:0000255" key="1">
    <source>
        <dbReference type="HAMAP-Rule" id="MF_00626"/>
    </source>
</evidence>
<gene>
    <name evidence="1" type="primary">gpr</name>
    <name type="ordered locus">BCG9842_B0796</name>
</gene>
<accession>B7IYH4</accession>
<comment type="function">
    <text evidence="1">Initiates the rapid degradation of small, acid-soluble proteins during spore germination.</text>
</comment>
<comment type="catalytic activity">
    <reaction evidence="1">
        <text>Endopeptidase action with P4 Glu or Asp, P1 preferably Glu &gt; Asp, P1' hydrophobic and P2' Ala.</text>
        <dbReference type="EC" id="3.4.24.78"/>
    </reaction>
</comment>
<comment type="subunit">
    <text evidence="1">Homotetramer.</text>
</comment>
<comment type="PTM">
    <text evidence="1">Autoproteolytically processed. The inactive tetrameric zymogen termed p46 autoprocesses to a smaller form termed p41, which is active only during spore germination.</text>
</comment>
<comment type="similarity">
    <text evidence="1">Belongs to the peptidase A25 family.</text>
</comment>
<name>GPR_BACC2</name>
<organism>
    <name type="scientific">Bacillus cereus (strain G9842)</name>
    <dbReference type="NCBI Taxonomy" id="405531"/>
    <lineage>
        <taxon>Bacteria</taxon>
        <taxon>Bacillati</taxon>
        <taxon>Bacillota</taxon>
        <taxon>Bacilli</taxon>
        <taxon>Bacillales</taxon>
        <taxon>Bacillaceae</taxon>
        <taxon>Bacillus</taxon>
        <taxon>Bacillus cereus group</taxon>
    </lineage>
</organism>
<dbReference type="EC" id="3.4.24.78" evidence="1"/>
<dbReference type="EMBL" id="CP001186">
    <property type="protein sequence ID" value="ACK94068.1"/>
    <property type="molecule type" value="Genomic_DNA"/>
</dbReference>
<dbReference type="RefSeq" id="WP_000662644.1">
    <property type="nucleotide sequence ID" value="NC_011772.1"/>
</dbReference>
<dbReference type="SMR" id="B7IYH4"/>
<dbReference type="MEROPS" id="A25.001"/>
<dbReference type="KEGG" id="bcg:BCG9842_B0796"/>
<dbReference type="HOGENOM" id="CLU_055087_1_0_9"/>
<dbReference type="Proteomes" id="UP000006744">
    <property type="component" value="Chromosome"/>
</dbReference>
<dbReference type="GO" id="GO:0004222">
    <property type="term" value="F:metalloendopeptidase activity"/>
    <property type="evidence" value="ECO:0007669"/>
    <property type="project" value="UniProtKB-UniRule"/>
</dbReference>
<dbReference type="GO" id="GO:0006508">
    <property type="term" value="P:proteolysis"/>
    <property type="evidence" value="ECO:0007669"/>
    <property type="project" value="UniProtKB-UniRule"/>
</dbReference>
<dbReference type="GO" id="GO:0009847">
    <property type="term" value="P:spore germination"/>
    <property type="evidence" value="ECO:0007669"/>
    <property type="project" value="UniProtKB-UniRule"/>
</dbReference>
<dbReference type="FunFam" id="3.40.50.1450:FF:000004">
    <property type="entry name" value="Germination protease"/>
    <property type="match status" value="1"/>
</dbReference>
<dbReference type="Gene3D" id="3.40.50.1450">
    <property type="entry name" value="HybD-like"/>
    <property type="match status" value="1"/>
</dbReference>
<dbReference type="HAMAP" id="MF_00626">
    <property type="entry name" value="Germination_prot"/>
    <property type="match status" value="1"/>
</dbReference>
<dbReference type="InterPro" id="IPR023430">
    <property type="entry name" value="Pept_HybD-like_dom_sf"/>
</dbReference>
<dbReference type="InterPro" id="IPR005080">
    <property type="entry name" value="Peptidase_A25"/>
</dbReference>
<dbReference type="NCBIfam" id="TIGR01441">
    <property type="entry name" value="GPR"/>
    <property type="match status" value="1"/>
</dbReference>
<dbReference type="Pfam" id="PF03418">
    <property type="entry name" value="Peptidase_A25"/>
    <property type="match status" value="1"/>
</dbReference>
<dbReference type="PIRSF" id="PIRSF019549">
    <property type="entry name" value="Peptidase_A25"/>
    <property type="match status" value="1"/>
</dbReference>
<dbReference type="SUPFAM" id="SSF53163">
    <property type="entry name" value="HybD-like"/>
    <property type="match status" value="1"/>
</dbReference>
<sequence>MKEPLDLSKYSVRTDLAVEAHQMLQESQEEQKGIQGVIVKEREEEGTIITKVTIDEAASEAMGKKPGNYLTLEVQGIRQQDTELQQKVERIFAKEFSYFLEEVGVTKEASCLIVGLGNWNVTPDALGPIVVENVLVTRHLFQLQPESVEEGFRPVSAIRPGVMGITGIETSDVIYGIIEKTNPDFVIAIDALAARSIERVNSTIQISDTGIHPGSGVGNKRKELSKETLGIPVIAIGVPTVVDAVSITSDTIDFILKHFGREMKEGNKPSRSLLPAGFSFGEKKKLTEEDMPDEKSRNMFLGAVGTLEEEEKRRLIYEVLSPLGHNLMVTPKEVDTFIEDMANVIASGLNAALHHQIDQDNTGAYTH</sequence>
<protein>
    <recommendedName>
        <fullName evidence="1">Germination protease</fullName>
        <ecNumber evidence="1">3.4.24.78</ecNumber>
    </recommendedName>
    <alternativeName>
        <fullName evidence="1">GPR endopeptidase</fullName>
    </alternativeName>
    <alternativeName>
        <fullName evidence="1">Germination proteinase</fullName>
    </alternativeName>
    <alternativeName>
        <fullName evidence="1">Spore protease</fullName>
    </alternativeName>
</protein>
<proteinExistence type="inferred from homology"/>
<reference key="1">
    <citation type="submission" date="2008-10" db="EMBL/GenBank/DDBJ databases">
        <title>Genome sequence of Bacillus cereus G9842.</title>
        <authorList>
            <person name="Dodson R.J."/>
            <person name="Durkin A.S."/>
            <person name="Rosovitz M.J."/>
            <person name="Rasko D.A."/>
            <person name="Hoffmaster A."/>
            <person name="Ravel J."/>
            <person name="Sutton G."/>
        </authorList>
    </citation>
    <scope>NUCLEOTIDE SEQUENCE [LARGE SCALE GENOMIC DNA]</scope>
    <source>
        <strain>G9842</strain>
    </source>
</reference>
<feature type="propeptide" id="PRO_1000130526" evidence="1">
    <location>
        <begin position="1"/>
        <end position="15"/>
    </location>
</feature>
<feature type="chain" id="PRO_1000130527" description="Germination protease">
    <location>
        <begin position="16"/>
        <end position="367"/>
    </location>
</feature>